<proteinExistence type="evidence at transcript level"/>
<organism>
    <name type="scientific">Xenopus tropicalis</name>
    <name type="common">Western clawed frog</name>
    <name type="synonym">Silurana tropicalis</name>
    <dbReference type="NCBI Taxonomy" id="8364"/>
    <lineage>
        <taxon>Eukaryota</taxon>
        <taxon>Metazoa</taxon>
        <taxon>Chordata</taxon>
        <taxon>Craniata</taxon>
        <taxon>Vertebrata</taxon>
        <taxon>Euteleostomi</taxon>
        <taxon>Amphibia</taxon>
        <taxon>Batrachia</taxon>
        <taxon>Anura</taxon>
        <taxon>Pipoidea</taxon>
        <taxon>Pipidae</taxon>
        <taxon>Xenopodinae</taxon>
        <taxon>Xenopus</taxon>
        <taxon>Silurana</taxon>
    </lineage>
</organism>
<sequence length="656" mass="71909">MQVPESSLAHLSEWQRDAFVLSSGTCLPQQKAEVYRAHLAQIQYAWANSEISEASAVHLFKKYAEKYSAIIDSDKLEIGLNNYADSILTLAKCQRNESDKWQSSLTTNNVLKLKSVQDMAVAGRRTQLSKSSADASVRVGNGINTSGYSAGLGNNVLRNSGYTVPHAALSDCQMPGGSANFLQKPKISAFTIANTTSVANTSSNTLINNSISMTSSLMQSNEDKDPASFSGHMFLPTTSVHSGKRKAYSALGNESSDIKPNPLVQRQLTNKEATCESGFKTAKEQLWVDQQKKYSNQPQRNPSPLYGGAKKSLGAARSRGLHGKFVPPVPRQEDVQDSNRKVYGQGNSEMNAPSDERLKNIEPKMIELIMSEIMDHGPPLNWDDIAGLEFAKTTIKEIVVWPMLRPDIFTGLRGPPKGILLFGPPGTGKTLIGKCIACQSGATFFSISASSLTSKWVGEGEKMVRALFTVARCHQPAVIFIDEIDSLLSQRGEGEHESSRRIKTEFLVQLDGATTSSDDRILVVGATNRPQEIDEAARRRLVKRLYIPLPEASARKQIVVSLMAKEHCSLAEQEVEAIVLQADGFSGADMTQLCREAALGPIRSIQLMDISTITPEQVRPIAYIDFQSAFLVVRPSVSQKDLELYENWNKTFGCGR</sequence>
<protein>
    <recommendedName>
        <fullName>Fidgetin-like protein 1</fullName>
        <ecNumber>3.6.4.-</ecNumber>
    </recommendedName>
</protein>
<accession>A4IHT0</accession>
<feature type="chain" id="PRO_0000302727" description="Fidgetin-like protein 1">
    <location>
        <begin position="1"/>
        <end position="656"/>
    </location>
</feature>
<feature type="region of interest" description="Disordered" evidence="4">
    <location>
        <begin position="293"/>
        <end position="354"/>
    </location>
</feature>
<feature type="compositionally biased region" description="Polar residues" evidence="4">
    <location>
        <begin position="293"/>
        <end position="302"/>
    </location>
</feature>
<feature type="compositionally biased region" description="Basic and acidic residues" evidence="4">
    <location>
        <begin position="331"/>
        <end position="340"/>
    </location>
</feature>
<feature type="binding site" evidence="2">
    <location>
        <position position="386"/>
    </location>
    <ligand>
        <name>ATP</name>
        <dbReference type="ChEBI" id="CHEBI:30616"/>
    </ligand>
</feature>
<feature type="binding site" evidence="2">
    <location>
        <begin position="426"/>
        <end position="431"/>
    </location>
    <ligand>
        <name>ATP</name>
        <dbReference type="ChEBI" id="CHEBI:30616"/>
    </ligand>
</feature>
<gene>
    <name type="primary">fignl1</name>
</gene>
<dbReference type="EC" id="3.6.4.-"/>
<dbReference type="EMBL" id="BC135671">
    <property type="protein sequence ID" value="AAI35672.1"/>
    <property type="molecule type" value="mRNA"/>
</dbReference>
<dbReference type="RefSeq" id="NP_001096311.1">
    <property type="nucleotide sequence ID" value="NM_001102841.1"/>
</dbReference>
<dbReference type="RefSeq" id="XP_012819639.1">
    <property type="nucleotide sequence ID" value="XM_012964185.3"/>
</dbReference>
<dbReference type="RefSeq" id="XP_012819640.1">
    <property type="nucleotide sequence ID" value="XM_012964186.3"/>
</dbReference>
<dbReference type="RefSeq" id="XP_012819641.1">
    <property type="nucleotide sequence ID" value="XM_012964187.2"/>
</dbReference>
<dbReference type="SMR" id="A4IHT0"/>
<dbReference type="FunCoup" id="A4IHT0">
    <property type="interactions" value="2348"/>
</dbReference>
<dbReference type="STRING" id="8364.ENSXETP00000017156"/>
<dbReference type="PaxDb" id="8364-ENSXETP00000034241"/>
<dbReference type="DNASU" id="100124890"/>
<dbReference type="GeneID" id="100124890"/>
<dbReference type="KEGG" id="xtr:100124890"/>
<dbReference type="AGR" id="Xenbase:XB-GENE-1000359"/>
<dbReference type="CTD" id="63979"/>
<dbReference type="Xenbase" id="XB-GENE-1000359">
    <property type="gene designation" value="fignl1"/>
</dbReference>
<dbReference type="eggNOG" id="KOG0740">
    <property type="taxonomic scope" value="Eukaryota"/>
</dbReference>
<dbReference type="HOGENOM" id="CLU_000688_21_10_1"/>
<dbReference type="InParanoid" id="A4IHT0"/>
<dbReference type="OMA" id="YSDKWES"/>
<dbReference type="OrthoDB" id="10251136at2759"/>
<dbReference type="PhylomeDB" id="A4IHT0"/>
<dbReference type="TreeFam" id="TF105013"/>
<dbReference type="Proteomes" id="UP000008143">
    <property type="component" value="Chromosome 6"/>
</dbReference>
<dbReference type="Bgee" id="ENSXETG00000015704">
    <property type="expression patterns" value="Expressed in egg cell and 12 other cell types or tissues"/>
</dbReference>
<dbReference type="ExpressionAtlas" id="A4IHT0">
    <property type="expression patterns" value="differential"/>
</dbReference>
<dbReference type="GO" id="GO:0000228">
    <property type="term" value="C:nuclear chromosome"/>
    <property type="evidence" value="ECO:0000250"/>
    <property type="project" value="UniProtKB"/>
</dbReference>
<dbReference type="GO" id="GO:0048471">
    <property type="term" value="C:perinuclear region of cytoplasm"/>
    <property type="evidence" value="ECO:0007669"/>
    <property type="project" value="UniProtKB-SubCell"/>
</dbReference>
<dbReference type="GO" id="GO:0005524">
    <property type="term" value="F:ATP binding"/>
    <property type="evidence" value="ECO:0007669"/>
    <property type="project" value="UniProtKB-KW"/>
</dbReference>
<dbReference type="GO" id="GO:0016887">
    <property type="term" value="F:ATP hydrolysis activity"/>
    <property type="evidence" value="ECO:0007669"/>
    <property type="project" value="InterPro"/>
</dbReference>
<dbReference type="GO" id="GO:0016787">
    <property type="term" value="F:hydrolase activity"/>
    <property type="evidence" value="ECO:0000250"/>
    <property type="project" value="UniProtKB"/>
</dbReference>
<dbReference type="GO" id="GO:0000287">
    <property type="term" value="F:magnesium ion binding"/>
    <property type="evidence" value="ECO:0000250"/>
    <property type="project" value="UniProtKB"/>
</dbReference>
<dbReference type="GO" id="GO:0030674">
    <property type="term" value="F:protein-macromolecule adaptor activity"/>
    <property type="evidence" value="ECO:0007669"/>
    <property type="project" value="Ensembl"/>
</dbReference>
<dbReference type="GO" id="GO:0046034">
    <property type="term" value="P:ATP metabolic process"/>
    <property type="evidence" value="ECO:0000250"/>
    <property type="project" value="UniProtKB"/>
</dbReference>
<dbReference type="GO" id="GO:0000226">
    <property type="term" value="P:microtubule cytoskeleton organization"/>
    <property type="evidence" value="ECO:0007669"/>
    <property type="project" value="Ensembl"/>
</dbReference>
<dbReference type="CDD" id="cd19525">
    <property type="entry name" value="RecA-like_Figl-1"/>
    <property type="match status" value="1"/>
</dbReference>
<dbReference type="FunFam" id="1.10.8.60:FF:000022">
    <property type="entry name" value="Fidgetin like 1"/>
    <property type="match status" value="1"/>
</dbReference>
<dbReference type="FunFam" id="3.40.50.300:FF:000093">
    <property type="entry name" value="Fidgetin-like 1"/>
    <property type="match status" value="1"/>
</dbReference>
<dbReference type="Gene3D" id="1.10.8.60">
    <property type="match status" value="1"/>
</dbReference>
<dbReference type="Gene3D" id="3.40.50.300">
    <property type="entry name" value="P-loop containing nucleotide triphosphate hydrolases"/>
    <property type="match status" value="1"/>
</dbReference>
<dbReference type="InterPro" id="IPR003593">
    <property type="entry name" value="AAA+_ATPase"/>
</dbReference>
<dbReference type="InterPro" id="IPR041569">
    <property type="entry name" value="AAA_lid_3"/>
</dbReference>
<dbReference type="InterPro" id="IPR003959">
    <property type="entry name" value="ATPase_AAA_core"/>
</dbReference>
<dbReference type="InterPro" id="IPR003960">
    <property type="entry name" value="ATPase_AAA_CS"/>
</dbReference>
<dbReference type="InterPro" id="IPR047858">
    <property type="entry name" value="FIGNL1_ATPase"/>
</dbReference>
<dbReference type="InterPro" id="IPR050304">
    <property type="entry name" value="MT-severing_AAA_ATPase"/>
</dbReference>
<dbReference type="InterPro" id="IPR027417">
    <property type="entry name" value="P-loop_NTPase"/>
</dbReference>
<dbReference type="InterPro" id="IPR015415">
    <property type="entry name" value="Spast_Vps4_C"/>
</dbReference>
<dbReference type="PANTHER" id="PTHR23074">
    <property type="entry name" value="AAA DOMAIN-CONTAINING"/>
    <property type="match status" value="1"/>
</dbReference>
<dbReference type="PANTHER" id="PTHR23074:SF75">
    <property type="entry name" value="DYNEIN REGULATORY COMPLEX PROTEIN 11-RELATED"/>
    <property type="match status" value="1"/>
</dbReference>
<dbReference type="Pfam" id="PF00004">
    <property type="entry name" value="AAA"/>
    <property type="match status" value="1"/>
</dbReference>
<dbReference type="Pfam" id="PF17862">
    <property type="entry name" value="AAA_lid_3"/>
    <property type="match status" value="1"/>
</dbReference>
<dbReference type="Pfam" id="PF09336">
    <property type="entry name" value="Vps4_C"/>
    <property type="match status" value="1"/>
</dbReference>
<dbReference type="SMART" id="SM00382">
    <property type="entry name" value="AAA"/>
    <property type="match status" value="1"/>
</dbReference>
<dbReference type="SUPFAM" id="SSF52540">
    <property type="entry name" value="P-loop containing nucleoside triphosphate hydrolases"/>
    <property type="match status" value="1"/>
</dbReference>
<dbReference type="PROSITE" id="PS00674">
    <property type="entry name" value="AAA"/>
    <property type="match status" value="1"/>
</dbReference>
<evidence type="ECO:0000250" key="1"/>
<evidence type="ECO:0000250" key="2">
    <source>
        <dbReference type="UniProtKB" id="Q6PIW4"/>
    </source>
</evidence>
<evidence type="ECO:0000250" key="3">
    <source>
        <dbReference type="UniProtKB" id="Q8BPY9"/>
    </source>
</evidence>
<evidence type="ECO:0000256" key="4">
    <source>
        <dbReference type="SAM" id="MobiDB-lite"/>
    </source>
</evidence>
<evidence type="ECO:0000305" key="5"/>
<name>FIGL1_XENTR</name>
<reference key="1">
    <citation type="submission" date="2007-03" db="EMBL/GenBank/DDBJ databases">
        <authorList>
            <consortium name="NIH - Xenopus Gene Collection (XGC) project"/>
        </authorList>
    </citation>
    <scope>NUCLEOTIDE SEQUENCE [LARGE SCALE MRNA]</scope>
    <source>
        <tissue>Embryo</tissue>
    </source>
</reference>
<keyword id="KW-0067">ATP-binding</keyword>
<keyword id="KW-0963">Cytoplasm</keyword>
<keyword id="KW-0378">Hydrolase</keyword>
<keyword id="KW-0460">Magnesium</keyword>
<keyword id="KW-0479">Metal-binding</keyword>
<keyword id="KW-0547">Nucleotide-binding</keyword>
<keyword id="KW-0539">Nucleus</keyword>
<keyword id="KW-1185">Reference proteome</keyword>
<comment type="function">
    <text evidence="2">May be involved in DNA double-strand break (DBS) repair via homologous recombination (HR). May regulate osteoblast proliferation and differentiation (By similarity).</text>
</comment>
<comment type="catalytic activity">
    <reaction>
        <text>ATP + H2O = ADP + phosphate + H(+)</text>
        <dbReference type="Rhea" id="RHEA:13065"/>
        <dbReference type="ChEBI" id="CHEBI:15377"/>
        <dbReference type="ChEBI" id="CHEBI:15378"/>
        <dbReference type="ChEBI" id="CHEBI:30616"/>
        <dbReference type="ChEBI" id="CHEBI:43474"/>
        <dbReference type="ChEBI" id="CHEBI:456216"/>
    </reaction>
</comment>
<comment type="cofactor">
    <cofactor evidence="1">
        <name>Mg(2+)</name>
        <dbReference type="ChEBI" id="CHEBI:18420"/>
    </cofactor>
</comment>
<comment type="subunit">
    <text evidence="1">Hexamer.</text>
</comment>
<comment type="subcellular location">
    <subcellularLocation>
        <location evidence="2">Nucleus</location>
    </subcellularLocation>
    <subcellularLocation>
        <location evidence="3">Cytoplasm</location>
    </subcellularLocation>
    <subcellularLocation>
        <location evidence="3">Cytoplasm</location>
        <location evidence="3">Perinuclear region</location>
    </subcellularLocation>
</comment>
<comment type="domain">
    <text evidence="2">The N-terminus is necessary for its recruitment to DNA damage sites.</text>
</comment>
<comment type="similarity">
    <text evidence="5">Belongs to the AAA ATPase family.</text>
</comment>